<proteinExistence type="inferred from homology"/>
<evidence type="ECO:0000255" key="1">
    <source>
        <dbReference type="HAMAP-Rule" id="MF_01212"/>
    </source>
</evidence>
<evidence type="ECO:0000255" key="2">
    <source>
        <dbReference type="PROSITE-ProRule" id="PRU01175"/>
    </source>
</evidence>
<evidence type="ECO:0000256" key="3">
    <source>
        <dbReference type="SAM" id="MobiDB-lite"/>
    </source>
</evidence>
<feature type="chain" id="PRO_0000205293" description="Deoxyguanosinetriphosphate triphosphohydrolase-like protein">
    <location>
        <begin position="1"/>
        <end position="384"/>
    </location>
</feature>
<feature type="domain" description="HD" evidence="2">
    <location>
        <begin position="73"/>
        <end position="208"/>
    </location>
</feature>
<feature type="region of interest" description="Disordered" evidence="3">
    <location>
        <begin position="12"/>
        <end position="39"/>
    </location>
</feature>
<feature type="compositionally biased region" description="Basic and acidic residues" evidence="3">
    <location>
        <begin position="28"/>
        <end position="39"/>
    </location>
</feature>
<protein>
    <recommendedName>
        <fullName evidence="1">Deoxyguanosinetriphosphate triphosphohydrolase-like protein</fullName>
    </recommendedName>
</protein>
<name>DGTL1_BORPA</name>
<sequence>MNKDGTVVLMNELASYASDPSKTRGRRHSEPPPENRTEFQRDRDRIIHSNAFRRLEYKTQVFVNHEGDLFRTRLTHSLEVAQIARTLARSLRVSEDLTEAIALAHDLGHTPFGHAGQDELNACMRELAPQAGGFEHNLQSLRVVDELEERYAEFNGLNLCFETREGILKHCSATHARQLGAVGERFLDRTQPSLEAQLANLADEVAYNNHDVDDGLRSGLITLEQLQEVGIFARHYAEVARRYPQLAPRRATSETIRRMINTLIVDLTATSLARIRDHAPASADDVRRAPPLAGFSAAVRREADELKKFLFDNLYRHYRVVRMTTKVQRIVRELFQAFLGDPRLLPPDYRREQPQDQARAISDYIAGMTDRYAIREHRRLFEMG</sequence>
<organism>
    <name type="scientific">Bordetella parapertussis (strain 12822 / ATCC BAA-587 / NCTC 13253)</name>
    <dbReference type="NCBI Taxonomy" id="257311"/>
    <lineage>
        <taxon>Bacteria</taxon>
        <taxon>Pseudomonadati</taxon>
        <taxon>Pseudomonadota</taxon>
        <taxon>Betaproteobacteria</taxon>
        <taxon>Burkholderiales</taxon>
        <taxon>Alcaligenaceae</taxon>
        <taxon>Bordetella</taxon>
    </lineage>
</organism>
<keyword id="KW-0378">Hydrolase</keyword>
<accession>Q7W2B5</accession>
<comment type="similarity">
    <text evidence="1">Belongs to the dGTPase family. Type 2 subfamily.</text>
</comment>
<gene>
    <name type="ordered locus">BPP0073</name>
</gene>
<reference key="1">
    <citation type="journal article" date="2003" name="Nat. Genet.">
        <title>Comparative analysis of the genome sequences of Bordetella pertussis, Bordetella parapertussis and Bordetella bronchiseptica.</title>
        <authorList>
            <person name="Parkhill J."/>
            <person name="Sebaihia M."/>
            <person name="Preston A."/>
            <person name="Murphy L.D."/>
            <person name="Thomson N.R."/>
            <person name="Harris D.E."/>
            <person name="Holden M.T.G."/>
            <person name="Churcher C.M."/>
            <person name="Bentley S.D."/>
            <person name="Mungall K.L."/>
            <person name="Cerdeno-Tarraga A.-M."/>
            <person name="Temple L."/>
            <person name="James K.D."/>
            <person name="Harris B."/>
            <person name="Quail M.A."/>
            <person name="Achtman M."/>
            <person name="Atkin R."/>
            <person name="Baker S."/>
            <person name="Basham D."/>
            <person name="Bason N."/>
            <person name="Cherevach I."/>
            <person name="Chillingworth T."/>
            <person name="Collins M."/>
            <person name="Cronin A."/>
            <person name="Davis P."/>
            <person name="Doggett J."/>
            <person name="Feltwell T."/>
            <person name="Goble A."/>
            <person name="Hamlin N."/>
            <person name="Hauser H."/>
            <person name="Holroyd S."/>
            <person name="Jagels K."/>
            <person name="Leather S."/>
            <person name="Moule S."/>
            <person name="Norberczak H."/>
            <person name="O'Neil S."/>
            <person name="Ormond D."/>
            <person name="Price C."/>
            <person name="Rabbinowitsch E."/>
            <person name="Rutter S."/>
            <person name="Sanders M."/>
            <person name="Saunders D."/>
            <person name="Seeger K."/>
            <person name="Sharp S."/>
            <person name="Simmonds M."/>
            <person name="Skelton J."/>
            <person name="Squares R."/>
            <person name="Squares S."/>
            <person name="Stevens K."/>
            <person name="Unwin L."/>
            <person name="Whitehead S."/>
            <person name="Barrell B.G."/>
            <person name="Maskell D.J."/>
        </authorList>
    </citation>
    <scope>NUCLEOTIDE SEQUENCE [LARGE SCALE GENOMIC DNA]</scope>
    <source>
        <strain>12822 / ATCC BAA-587 / NCTC 13253</strain>
    </source>
</reference>
<dbReference type="EMBL" id="BX640423">
    <property type="protein sequence ID" value="CAE39814.1"/>
    <property type="molecule type" value="Genomic_DNA"/>
</dbReference>
<dbReference type="RefSeq" id="WP_010927275.1">
    <property type="nucleotide sequence ID" value="NC_002928.3"/>
</dbReference>
<dbReference type="SMR" id="Q7W2B5"/>
<dbReference type="GeneID" id="93206304"/>
<dbReference type="KEGG" id="bpa:BPP0073"/>
<dbReference type="HOGENOM" id="CLU_028163_1_0_4"/>
<dbReference type="Proteomes" id="UP000001421">
    <property type="component" value="Chromosome"/>
</dbReference>
<dbReference type="GO" id="GO:0008832">
    <property type="term" value="F:dGTPase activity"/>
    <property type="evidence" value="ECO:0007669"/>
    <property type="project" value="TreeGrafter"/>
</dbReference>
<dbReference type="GO" id="GO:0006203">
    <property type="term" value="P:dGTP catabolic process"/>
    <property type="evidence" value="ECO:0007669"/>
    <property type="project" value="TreeGrafter"/>
</dbReference>
<dbReference type="CDD" id="cd00077">
    <property type="entry name" value="HDc"/>
    <property type="match status" value="1"/>
</dbReference>
<dbReference type="FunFam" id="1.10.3210.10:FF:000024">
    <property type="entry name" value="Deoxyguanosinetriphosphate triphosphohydrolase-like protein"/>
    <property type="match status" value="1"/>
</dbReference>
<dbReference type="Gene3D" id="1.10.3210.10">
    <property type="entry name" value="Hypothetical protein af1432"/>
    <property type="match status" value="1"/>
</dbReference>
<dbReference type="HAMAP" id="MF_01212">
    <property type="entry name" value="dGTPase_type2"/>
    <property type="match status" value="1"/>
</dbReference>
<dbReference type="InterPro" id="IPR006261">
    <property type="entry name" value="dGTPase"/>
</dbReference>
<dbReference type="InterPro" id="IPR050135">
    <property type="entry name" value="dGTPase-like"/>
</dbReference>
<dbReference type="InterPro" id="IPR023023">
    <property type="entry name" value="dNTPase_2"/>
</dbReference>
<dbReference type="InterPro" id="IPR003607">
    <property type="entry name" value="HD/PDEase_dom"/>
</dbReference>
<dbReference type="InterPro" id="IPR006674">
    <property type="entry name" value="HD_domain"/>
</dbReference>
<dbReference type="InterPro" id="IPR026875">
    <property type="entry name" value="PHydrolase_assoc_dom"/>
</dbReference>
<dbReference type="NCBIfam" id="TIGR01353">
    <property type="entry name" value="dGTP_triPase"/>
    <property type="match status" value="1"/>
</dbReference>
<dbReference type="NCBIfam" id="NF002326">
    <property type="entry name" value="PRK01286.1-1"/>
    <property type="match status" value="1"/>
</dbReference>
<dbReference type="PANTHER" id="PTHR11373:SF43">
    <property type="entry name" value="DEOXYGUANOSINETRIPHOSPHATE TRIPHOSPHOHYDROLASE-LIKE PROTEIN"/>
    <property type="match status" value="1"/>
</dbReference>
<dbReference type="PANTHER" id="PTHR11373">
    <property type="entry name" value="DEOXYNUCLEOSIDE TRIPHOSPHATE TRIPHOSPHOHYDROLASE"/>
    <property type="match status" value="1"/>
</dbReference>
<dbReference type="Pfam" id="PF01966">
    <property type="entry name" value="HD"/>
    <property type="match status" value="1"/>
</dbReference>
<dbReference type="Pfam" id="PF13286">
    <property type="entry name" value="HD_assoc"/>
    <property type="match status" value="1"/>
</dbReference>
<dbReference type="SMART" id="SM00471">
    <property type="entry name" value="HDc"/>
    <property type="match status" value="1"/>
</dbReference>
<dbReference type="SUPFAM" id="SSF109604">
    <property type="entry name" value="HD-domain/PDEase-like"/>
    <property type="match status" value="1"/>
</dbReference>
<dbReference type="PROSITE" id="PS51831">
    <property type="entry name" value="HD"/>
    <property type="match status" value="1"/>
</dbReference>